<accession>Q5ZXI0</accession>
<evidence type="ECO:0000269" key="1">
    <source>
    </source>
</evidence>
<evidence type="ECO:0000305" key="2"/>
<feature type="chain" id="PRO_0000424186" description="CMP-N,N'-diacetyllegionaminic acid synthase">
    <location>
        <begin position="1"/>
        <end position="232"/>
    </location>
</feature>
<name>NEUAH_LEGPH</name>
<gene>
    <name type="primary">neuA</name>
    <name type="ordered locus">lpg0751</name>
</gene>
<keyword id="KW-0548">Nucleotidyltransferase</keyword>
<keyword id="KW-1185">Reference proteome</keyword>
<keyword id="KW-0808">Transferase</keyword>
<protein>
    <recommendedName>
        <fullName>CMP-N,N'-diacetyllegionaminic acid synthase</fullName>
        <ecNumber>2.7.7.82</ecNumber>
    </recommendedName>
</protein>
<sequence>MRILAVIPARAGSKRLPGKNTRLLAGKPLIAHTIVAALQSSCCEEIVVSTDSKQIADVAVQYGASVPWLRSEDLATDTSDVIHTVIDLLFKFQQMDVFFDSVLLLQPTSPFRKPETIRHAVEIHKVTGKSVVSVSPISLKPSWCRSIDSQGNLVKPELFQDLEIYCNENPIYKLNGSIYIATAKQIIENKSFYSEPTKPLLLNSISESIDIDTPIDWALTEKLMELNQEALV</sequence>
<comment type="function">
    <text evidence="1">Involved in biosynthesis of legionaminic acid (5,7-diamino-3,5,7,9-tetradeoxy-D-glycero-D-galacto-non-2-ulosonic acid)(Leg), a sialic acid-like derivative that is incorporated into virulence-associated cell surface glycoconjugates such as lipopolysaccharide (LPS) which could be a key determinant in the ability of L.pneumophila to inhibit the fusion of phagosomes with lysosomes. LPS contains a majority alpha2,4-linked homomer of legionaminic acid. Catalyzes the conversion of N,N'-diacetyllegionaminic acid (Leg5Ac7Ac) and CTP into CMP-N,N'-diacetyllegionaminic acid (CMP-Leg5Ac7Ac).</text>
</comment>
<comment type="catalytic activity">
    <reaction evidence="1">
        <text>N,N-diacetyllegionaminate + CTP = CMP-N,N-diacetyllegionaminate + diphosphate</text>
        <dbReference type="Rhea" id="RHEA:34675"/>
        <dbReference type="ChEBI" id="CHEBI:33019"/>
        <dbReference type="ChEBI" id="CHEBI:37563"/>
        <dbReference type="ChEBI" id="CHEBI:68669"/>
        <dbReference type="ChEBI" id="CHEBI:68670"/>
        <dbReference type="EC" id="2.7.7.82"/>
    </reaction>
</comment>
<comment type="similarity">
    <text evidence="2">Belongs to the CMP-NeuNAc synthase family.</text>
</comment>
<dbReference type="EC" id="2.7.7.82"/>
<dbReference type="EMBL" id="AE017354">
    <property type="protein sequence ID" value="AAU26840.1"/>
    <property type="molecule type" value="Genomic_DNA"/>
</dbReference>
<dbReference type="RefSeq" id="WP_010946488.1">
    <property type="nucleotide sequence ID" value="NC_002942.5"/>
</dbReference>
<dbReference type="RefSeq" id="YP_094787.1">
    <property type="nucleotide sequence ID" value="NC_002942.5"/>
</dbReference>
<dbReference type="SMR" id="Q5ZXI0"/>
<dbReference type="STRING" id="272624.lpg0751"/>
<dbReference type="PaxDb" id="272624-lpg0751"/>
<dbReference type="GeneID" id="57034744"/>
<dbReference type="KEGG" id="lpn:lpg0751"/>
<dbReference type="PATRIC" id="fig|272624.6.peg.776"/>
<dbReference type="eggNOG" id="COG1083">
    <property type="taxonomic scope" value="Bacteria"/>
</dbReference>
<dbReference type="HOGENOM" id="CLU_042930_1_1_6"/>
<dbReference type="OrthoDB" id="9805604at2"/>
<dbReference type="BioCyc" id="MetaCyc:MONOMER-17730"/>
<dbReference type="Proteomes" id="UP000000609">
    <property type="component" value="Chromosome"/>
</dbReference>
<dbReference type="GO" id="GO:0008781">
    <property type="term" value="F:N-acylneuraminate cytidylyltransferase activity"/>
    <property type="evidence" value="ECO:0007669"/>
    <property type="project" value="TreeGrafter"/>
</dbReference>
<dbReference type="GO" id="GO:0016779">
    <property type="term" value="F:nucleotidyltransferase activity"/>
    <property type="evidence" value="ECO:0000314"/>
    <property type="project" value="UniProtKB"/>
</dbReference>
<dbReference type="GO" id="GO:0009103">
    <property type="term" value="P:lipopolysaccharide biosynthetic process"/>
    <property type="evidence" value="ECO:0000314"/>
    <property type="project" value="UniProtKB"/>
</dbReference>
<dbReference type="CDD" id="cd02513">
    <property type="entry name" value="CMP-NeuAc_Synthase"/>
    <property type="match status" value="1"/>
</dbReference>
<dbReference type="Gene3D" id="3.90.550.10">
    <property type="entry name" value="Spore Coat Polysaccharide Biosynthesis Protein SpsA, Chain A"/>
    <property type="match status" value="1"/>
</dbReference>
<dbReference type="InterPro" id="IPR050793">
    <property type="entry name" value="CMP-NeuNAc_synthase"/>
</dbReference>
<dbReference type="InterPro" id="IPR003329">
    <property type="entry name" value="Cytidylyl_trans"/>
</dbReference>
<dbReference type="InterPro" id="IPR029044">
    <property type="entry name" value="Nucleotide-diphossugar_trans"/>
</dbReference>
<dbReference type="PANTHER" id="PTHR21485">
    <property type="entry name" value="HAD SUPERFAMILY MEMBERS CMAS AND KDSC"/>
    <property type="match status" value="1"/>
</dbReference>
<dbReference type="PANTHER" id="PTHR21485:SF6">
    <property type="entry name" value="N-ACYLNEURAMINATE CYTIDYLYLTRANSFERASE-RELATED"/>
    <property type="match status" value="1"/>
</dbReference>
<dbReference type="Pfam" id="PF02348">
    <property type="entry name" value="CTP_transf_3"/>
    <property type="match status" value="1"/>
</dbReference>
<dbReference type="SUPFAM" id="SSF53448">
    <property type="entry name" value="Nucleotide-diphospho-sugar transferases"/>
    <property type="match status" value="1"/>
</dbReference>
<proteinExistence type="evidence at protein level"/>
<reference key="1">
    <citation type="journal article" date="2004" name="Science">
        <title>The genomic sequence of the accidental pathogen Legionella pneumophila.</title>
        <authorList>
            <person name="Chien M."/>
            <person name="Morozova I."/>
            <person name="Shi S."/>
            <person name="Sheng H."/>
            <person name="Chen J."/>
            <person name="Gomez S.M."/>
            <person name="Asamani G."/>
            <person name="Hill K."/>
            <person name="Nuara J."/>
            <person name="Feder M."/>
            <person name="Rineer J."/>
            <person name="Greenberg J.J."/>
            <person name="Steshenko V."/>
            <person name="Park S.H."/>
            <person name="Zhao B."/>
            <person name="Teplitskaya E."/>
            <person name="Edwards J.R."/>
            <person name="Pampou S."/>
            <person name="Georghiou A."/>
            <person name="Chou I.-C."/>
            <person name="Iannuccilli W."/>
            <person name="Ulz M.E."/>
            <person name="Kim D.H."/>
            <person name="Geringer-Sameth A."/>
            <person name="Goldsberry C."/>
            <person name="Morozov P."/>
            <person name="Fischer S.G."/>
            <person name="Segal G."/>
            <person name="Qu X."/>
            <person name="Rzhetsky A."/>
            <person name="Zhang P."/>
            <person name="Cayanis E."/>
            <person name="De Jong P.J."/>
            <person name="Ju J."/>
            <person name="Kalachikov S."/>
            <person name="Shuman H.A."/>
            <person name="Russo J.J."/>
        </authorList>
    </citation>
    <scope>NUCLEOTIDE SEQUENCE [LARGE SCALE GENOMIC DNA]</scope>
    <source>
        <strain>Philadelphia 1 / ATCC 33152 / DSM 7513</strain>
    </source>
</reference>
<reference key="2">
    <citation type="journal article" date="2008" name="Biochemistry">
        <title>Biosynthesis of CMP-N,N'-diacetyllegionaminic acid from UDP-N,N'-diacetylbacillosamine in Legionella pneumophila.</title>
        <authorList>
            <person name="Glaze P.A."/>
            <person name="Watson D.C."/>
            <person name="Young N.M."/>
            <person name="Tanner M.E."/>
        </authorList>
    </citation>
    <scope>FUNCTION</scope>
    <scope>CATALYTIC ACTIVITY</scope>
    <source>
        <strain>Philadelphia 1 / ATCC 33152 / DSM 7513</strain>
    </source>
</reference>
<organism>
    <name type="scientific">Legionella pneumophila subsp. pneumophila (strain Philadelphia 1 / ATCC 33152 / DSM 7513)</name>
    <dbReference type="NCBI Taxonomy" id="272624"/>
    <lineage>
        <taxon>Bacteria</taxon>
        <taxon>Pseudomonadati</taxon>
        <taxon>Pseudomonadota</taxon>
        <taxon>Gammaproteobacteria</taxon>
        <taxon>Legionellales</taxon>
        <taxon>Legionellaceae</taxon>
        <taxon>Legionella</taxon>
    </lineage>
</organism>